<accession>Q5L3Z8</accession>
<keyword id="KW-1185">Reference proteome</keyword>
<keyword id="KW-0687">Ribonucleoprotein</keyword>
<keyword id="KW-0689">Ribosomal protein</keyword>
<organism>
    <name type="scientific">Geobacillus kaustophilus (strain HTA426)</name>
    <dbReference type="NCBI Taxonomy" id="235909"/>
    <lineage>
        <taxon>Bacteria</taxon>
        <taxon>Bacillati</taxon>
        <taxon>Bacillota</taxon>
        <taxon>Bacilli</taxon>
        <taxon>Bacillales</taxon>
        <taxon>Anoxybacillaceae</taxon>
        <taxon>Geobacillus</taxon>
        <taxon>Geobacillus thermoleovorans group</taxon>
    </lineage>
</organism>
<proteinExistence type="inferred from homology"/>
<evidence type="ECO:0000255" key="1">
    <source>
        <dbReference type="HAMAP-Rule" id="MF_00508"/>
    </source>
</evidence>
<evidence type="ECO:0000305" key="2"/>
<dbReference type="EMBL" id="BA000043">
    <property type="protein sequence ID" value="BAD74390.1"/>
    <property type="molecule type" value="Genomic_DNA"/>
</dbReference>
<dbReference type="RefSeq" id="WP_008881945.1">
    <property type="nucleotide sequence ID" value="NC_006510.1"/>
</dbReference>
<dbReference type="SMR" id="Q5L3Z8"/>
<dbReference type="STRING" id="235909.GK0105"/>
<dbReference type="GeneID" id="89612901"/>
<dbReference type="KEGG" id="gka:GK0105"/>
<dbReference type="eggNOG" id="COG0051">
    <property type="taxonomic scope" value="Bacteria"/>
</dbReference>
<dbReference type="HOGENOM" id="CLU_122625_1_3_9"/>
<dbReference type="Proteomes" id="UP000001172">
    <property type="component" value="Chromosome"/>
</dbReference>
<dbReference type="GO" id="GO:1990904">
    <property type="term" value="C:ribonucleoprotein complex"/>
    <property type="evidence" value="ECO:0007669"/>
    <property type="project" value="UniProtKB-KW"/>
</dbReference>
<dbReference type="GO" id="GO:0005840">
    <property type="term" value="C:ribosome"/>
    <property type="evidence" value="ECO:0007669"/>
    <property type="project" value="UniProtKB-KW"/>
</dbReference>
<dbReference type="GO" id="GO:0003735">
    <property type="term" value="F:structural constituent of ribosome"/>
    <property type="evidence" value="ECO:0007669"/>
    <property type="project" value="InterPro"/>
</dbReference>
<dbReference type="GO" id="GO:0000049">
    <property type="term" value="F:tRNA binding"/>
    <property type="evidence" value="ECO:0007669"/>
    <property type="project" value="UniProtKB-UniRule"/>
</dbReference>
<dbReference type="GO" id="GO:0006412">
    <property type="term" value="P:translation"/>
    <property type="evidence" value="ECO:0007669"/>
    <property type="project" value="UniProtKB-UniRule"/>
</dbReference>
<dbReference type="FunFam" id="3.30.70.600:FF:000001">
    <property type="entry name" value="30S ribosomal protein S10"/>
    <property type="match status" value="1"/>
</dbReference>
<dbReference type="Gene3D" id="3.30.70.600">
    <property type="entry name" value="Ribosomal protein S10 domain"/>
    <property type="match status" value="1"/>
</dbReference>
<dbReference type="HAMAP" id="MF_00508">
    <property type="entry name" value="Ribosomal_uS10"/>
    <property type="match status" value="1"/>
</dbReference>
<dbReference type="InterPro" id="IPR001848">
    <property type="entry name" value="Ribosomal_uS10"/>
</dbReference>
<dbReference type="InterPro" id="IPR018268">
    <property type="entry name" value="Ribosomal_uS10_CS"/>
</dbReference>
<dbReference type="InterPro" id="IPR027486">
    <property type="entry name" value="Ribosomal_uS10_dom"/>
</dbReference>
<dbReference type="InterPro" id="IPR036838">
    <property type="entry name" value="Ribosomal_uS10_dom_sf"/>
</dbReference>
<dbReference type="NCBIfam" id="NF001861">
    <property type="entry name" value="PRK00596.1"/>
    <property type="match status" value="1"/>
</dbReference>
<dbReference type="NCBIfam" id="TIGR01049">
    <property type="entry name" value="rpsJ_bact"/>
    <property type="match status" value="1"/>
</dbReference>
<dbReference type="PANTHER" id="PTHR11700">
    <property type="entry name" value="30S RIBOSOMAL PROTEIN S10 FAMILY MEMBER"/>
    <property type="match status" value="1"/>
</dbReference>
<dbReference type="Pfam" id="PF00338">
    <property type="entry name" value="Ribosomal_S10"/>
    <property type="match status" value="1"/>
</dbReference>
<dbReference type="PRINTS" id="PR00971">
    <property type="entry name" value="RIBOSOMALS10"/>
</dbReference>
<dbReference type="SMART" id="SM01403">
    <property type="entry name" value="Ribosomal_S10"/>
    <property type="match status" value="1"/>
</dbReference>
<dbReference type="SUPFAM" id="SSF54999">
    <property type="entry name" value="Ribosomal protein S10"/>
    <property type="match status" value="1"/>
</dbReference>
<dbReference type="PROSITE" id="PS00361">
    <property type="entry name" value="RIBOSOMAL_S10"/>
    <property type="match status" value="1"/>
</dbReference>
<comment type="function">
    <text evidence="1">Involved in the binding of tRNA to the ribosomes.</text>
</comment>
<comment type="subunit">
    <text evidence="1">Part of the 30S ribosomal subunit.</text>
</comment>
<comment type="similarity">
    <text evidence="1">Belongs to the universal ribosomal protein uS10 family.</text>
</comment>
<name>RS10_GEOKA</name>
<gene>
    <name evidence="1" type="primary">rpsJ</name>
    <name type="ordered locus">GK0105</name>
</gene>
<feature type="chain" id="PRO_0000237047" description="Small ribosomal subunit protein uS10">
    <location>
        <begin position="1"/>
        <end position="102"/>
    </location>
</feature>
<sequence>MAKEKIRIRLKAYDHRILDQSAEKIVETAKRSGAKVSGPIPLPTERTVYTILRAVHKYKDSREQFEMRTHKRLIDIINPTPQTVDSLMRLDLPSGVDIEIKL</sequence>
<protein>
    <recommendedName>
        <fullName evidence="1">Small ribosomal subunit protein uS10</fullName>
    </recommendedName>
    <alternativeName>
        <fullName evidence="2">30S ribosomal protein S10</fullName>
    </alternativeName>
</protein>
<reference key="1">
    <citation type="journal article" date="2004" name="Nucleic Acids Res.">
        <title>Thermoadaptation trait revealed by the genome sequence of thermophilic Geobacillus kaustophilus.</title>
        <authorList>
            <person name="Takami H."/>
            <person name="Takaki Y."/>
            <person name="Chee G.-J."/>
            <person name="Nishi S."/>
            <person name="Shimamura S."/>
            <person name="Suzuki H."/>
            <person name="Matsui S."/>
            <person name="Uchiyama I."/>
        </authorList>
    </citation>
    <scope>NUCLEOTIDE SEQUENCE [LARGE SCALE GENOMIC DNA]</scope>
    <source>
        <strain>HTA426</strain>
    </source>
</reference>